<evidence type="ECO:0000255" key="1">
    <source>
        <dbReference type="HAMAP-Rule" id="MF_00551"/>
    </source>
</evidence>
<evidence type="ECO:0007829" key="2">
    <source>
        <dbReference type="PDB" id="3W34"/>
    </source>
</evidence>
<name>URK_THET8</name>
<sequence length="211" mass="23674">MSAPKPFVIGIAGGTASGKTTLAQALARTLGERVALLPMDHYYKDLGHLPLEERLRVNYDHPDAFDLALYLEHAQALLRGLPVEMPVYDFRAYTRSPRRTPVRPAPVVILEGILVLYPKELRDLMDLKVFVDADADERFIRRLKRDVLERGRSLEGVVAQYLEQVKPMHLHFVEPTKRYADVIVPRGGQNPVALEMLAAKALARLARMGAA</sequence>
<keyword id="KW-0002">3D-structure</keyword>
<keyword id="KW-0067">ATP-binding</keyword>
<keyword id="KW-0963">Cytoplasm</keyword>
<keyword id="KW-0418">Kinase</keyword>
<keyword id="KW-0547">Nucleotide-binding</keyword>
<keyword id="KW-1185">Reference proteome</keyword>
<keyword id="KW-0808">Transferase</keyword>
<feature type="chain" id="PRO_1000081978" description="Uridine kinase">
    <location>
        <begin position="1"/>
        <end position="211"/>
    </location>
</feature>
<feature type="binding site" evidence="1">
    <location>
        <begin position="13"/>
        <end position="20"/>
    </location>
    <ligand>
        <name>ATP</name>
        <dbReference type="ChEBI" id="CHEBI:30616"/>
    </ligand>
</feature>
<feature type="strand" evidence="2">
    <location>
        <begin position="7"/>
        <end position="14"/>
    </location>
</feature>
<feature type="helix" evidence="2">
    <location>
        <begin position="19"/>
        <end position="30"/>
    </location>
</feature>
<feature type="helix" evidence="2">
    <location>
        <begin position="31"/>
        <end position="33"/>
    </location>
</feature>
<feature type="strand" evidence="2">
    <location>
        <begin position="34"/>
        <end position="38"/>
    </location>
</feature>
<feature type="helix" evidence="2">
    <location>
        <begin position="39"/>
        <end position="41"/>
    </location>
</feature>
<feature type="helix" evidence="2">
    <location>
        <begin position="51"/>
        <end position="56"/>
    </location>
</feature>
<feature type="helix" evidence="2">
    <location>
        <begin position="62"/>
        <end position="64"/>
    </location>
</feature>
<feature type="helix" evidence="2">
    <location>
        <begin position="67"/>
        <end position="78"/>
    </location>
</feature>
<feature type="strand" evidence="2">
    <location>
        <begin position="83"/>
        <end position="89"/>
    </location>
</feature>
<feature type="turn" evidence="2">
    <location>
        <begin position="90"/>
        <end position="93"/>
    </location>
</feature>
<feature type="strand" evidence="2">
    <location>
        <begin position="94"/>
        <end position="102"/>
    </location>
</feature>
<feature type="strand" evidence="2">
    <location>
        <begin position="106"/>
        <end position="112"/>
    </location>
</feature>
<feature type="turn" evidence="2">
    <location>
        <begin position="113"/>
        <end position="116"/>
    </location>
</feature>
<feature type="helix" evidence="2">
    <location>
        <begin position="119"/>
        <end position="122"/>
    </location>
</feature>
<feature type="strand" evidence="2">
    <location>
        <begin position="126"/>
        <end position="132"/>
    </location>
</feature>
<feature type="helix" evidence="2">
    <location>
        <begin position="135"/>
        <end position="149"/>
    </location>
</feature>
<feature type="helix" evidence="2">
    <location>
        <begin position="154"/>
        <end position="163"/>
    </location>
</feature>
<feature type="helix" evidence="2">
    <location>
        <begin position="165"/>
        <end position="171"/>
    </location>
</feature>
<feature type="helix" evidence="2">
    <location>
        <begin position="174"/>
        <end position="179"/>
    </location>
</feature>
<feature type="strand" evidence="2">
    <location>
        <begin position="181"/>
        <end position="186"/>
    </location>
</feature>
<feature type="helix" evidence="2">
    <location>
        <begin position="191"/>
        <end position="209"/>
    </location>
</feature>
<accession>Q5SKR5</accession>
<protein>
    <recommendedName>
        <fullName evidence="1">Uridine kinase</fullName>
        <ecNumber evidence="1">2.7.1.48</ecNumber>
    </recommendedName>
    <alternativeName>
        <fullName evidence="1">Cytidine monophosphokinase</fullName>
    </alternativeName>
    <alternativeName>
        <fullName evidence="1">Uridine monophosphokinase</fullName>
    </alternativeName>
</protein>
<proteinExistence type="evidence at protein level"/>
<reference key="1">
    <citation type="submission" date="2004-11" db="EMBL/GenBank/DDBJ databases">
        <title>Complete genome sequence of Thermus thermophilus HB8.</title>
        <authorList>
            <person name="Masui R."/>
            <person name="Kurokawa K."/>
            <person name="Nakagawa N."/>
            <person name="Tokunaga F."/>
            <person name="Koyama Y."/>
            <person name="Shibata T."/>
            <person name="Oshima T."/>
            <person name="Yokoyama S."/>
            <person name="Yasunaga T."/>
            <person name="Kuramitsu S."/>
        </authorList>
    </citation>
    <scope>NUCLEOTIDE SEQUENCE [LARGE SCALE GENOMIC DNA]</scope>
    <source>
        <strain>ATCC 27634 / DSM 579 / HB8</strain>
    </source>
</reference>
<organism>
    <name type="scientific">Thermus thermophilus (strain ATCC 27634 / DSM 579 / HB8)</name>
    <dbReference type="NCBI Taxonomy" id="300852"/>
    <lineage>
        <taxon>Bacteria</taxon>
        <taxon>Thermotogati</taxon>
        <taxon>Deinococcota</taxon>
        <taxon>Deinococci</taxon>
        <taxon>Thermales</taxon>
        <taxon>Thermaceae</taxon>
        <taxon>Thermus</taxon>
    </lineage>
</organism>
<comment type="catalytic activity">
    <reaction evidence="1">
        <text>uridine + ATP = UMP + ADP + H(+)</text>
        <dbReference type="Rhea" id="RHEA:16825"/>
        <dbReference type="ChEBI" id="CHEBI:15378"/>
        <dbReference type="ChEBI" id="CHEBI:16704"/>
        <dbReference type="ChEBI" id="CHEBI:30616"/>
        <dbReference type="ChEBI" id="CHEBI:57865"/>
        <dbReference type="ChEBI" id="CHEBI:456216"/>
        <dbReference type="EC" id="2.7.1.48"/>
    </reaction>
</comment>
<comment type="catalytic activity">
    <reaction evidence="1">
        <text>cytidine + ATP = CMP + ADP + H(+)</text>
        <dbReference type="Rhea" id="RHEA:24674"/>
        <dbReference type="ChEBI" id="CHEBI:15378"/>
        <dbReference type="ChEBI" id="CHEBI:17562"/>
        <dbReference type="ChEBI" id="CHEBI:30616"/>
        <dbReference type="ChEBI" id="CHEBI:60377"/>
        <dbReference type="ChEBI" id="CHEBI:456216"/>
        <dbReference type="EC" id="2.7.1.48"/>
    </reaction>
</comment>
<comment type="pathway">
    <text evidence="1">Pyrimidine metabolism; CTP biosynthesis via salvage pathway; CTP from cytidine: step 1/3.</text>
</comment>
<comment type="pathway">
    <text evidence="1">Pyrimidine metabolism; UMP biosynthesis via salvage pathway; UMP from uridine: step 1/1.</text>
</comment>
<comment type="subcellular location">
    <subcellularLocation>
        <location evidence="1">Cytoplasm</location>
    </subcellularLocation>
</comment>
<comment type="similarity">
    <text evidence="1">Belongs to the uridine kinase family.</text>
</comment>
<dbReference type="EC" id="2.7.1.48" evidence="1"/>
<dbReference type="EMBL" id="AP008226">
    <property type="protein sequence ID" value="BAD70401.1"/>
    <property type="molecule type" value="Genomic_DNA"/>
</dbReference>
<dbReference type="RefSeq" id="WP_011172663.1">
    <property type="nucleotide sequence ID" value="NC_006461.1"/>
</dbReference>
<dbReference type="RefSeq" id="YP_143844.1">
    <property type="nucleotide sequence ID" value="NC_006461.1"/>
</dbReference>
<dbReference type="PDB" id="3ASY">
    <property type="method" value="X-ray"/>
    <property type="resolution" value="2.40 A"/>
    <property type="chains" value="A/B=1-211"/>
</dbReference>
<dbReference type="PDB" id="3ASZ">
    <property type="method" value="X-ray"/>
    <property type="resolution" value="2.25 A"/>
    <property type="chains" value="A/B=1-211"/>
</dbReference>
<dbReference type="PDB" id="3W34">
    <property type="method" value="X-ray"/>
    <property type="resolution" value="1.91 A"/>
    <property type="chains" value="A/B=1-211"/>
</dbReference>
<dbReference type="PDB" id="3W8R">
    <property type="method" value="X-ray"/>
    <property type="resolution" value="2.50 A"/>
    <property type="chains" value="A/B=1-211"/>
</dbReference>
<dbReference type="PDBsum" id="3ASY"/>
<dbReference type="PDBsum" id="3ASZ"/>
<dbReference type="PDBsum" id="3W34"/>
<dbReference type="PDBsum" id="3W8R"/>
<dbReference type="SMR" id="Q5SKR5"/>
<dbReference type="EnsemblBacteria" id="BAD70401">
    <property type="protein sequence ID" value="BAD70401"/>
    <property type="gene ID" value="BAD70401"/>
</dbReference>
<dbReference type="GeneID" id="3168643"/>
<dbReference type="KEGG" id="ttj:TTHA0578"/>
<dbReference type="PATRIC" id="fig|300852.9.peg.577"/>
<dbReference type="eggNOG" id="COG0572">
    <property type="taxonomic scope" value="Bacteria"/>
</dbReference>
<dbReference type="HOGENOM" id="CLU_021278_1_2_0"/>
<dbReference type="PhylomeDB" id="Q5SKR5"/>
<dbReference type="BRENDA" id="2.7.1.48">
    <property type="organism ID" value="2305"/>
</dbReference>
<dbReference type="UniPathway" id="UPA00574">
    <property type="reaction ID" value="UER00637"/>
</dbReference>
<dbReference type="UniPathway" id="UPA00579">
    <property type="reaction ID" value="UER00640"/>
</dbReference>
<dbReference type="EvolutionaryTrace" id="Q5SKR5"/>
<dbReference type="Proteomes" id="UP000000532">
    <property type="component" value="Chromosome"/>
</dbReference>
<dbReference type="GO" id="GO:0005737">
    <property type="term" value="C:cytoplasm"/>
    <property type="evidence" value="ECO:0007669"/>
    <property type="project" value="UniProtKB-SubCell"/>
</dbReference>
<dbReference type="GO" id="GO:0005524">
    <property type="term" value="F:ATP binding"/>
    <property type="evidence" value="ECO:0007669"/>
    <property type="project" value="UniProtKB-UniRule"/>
</dbReference>
<dbReference type="GO" id="GO:0043771">
    <property type="term" value="F:cytidine kinase activity"/>
    <property type="evidence" value="ECO:0007669"/>
    <property type="project" value="RHEA"/>
</dbReference>
<dbReference type="GO" id="GO:0004849">
    <property type="term" value="F:uridine kinase activity"/>
    <property type="evidence" value="ECO:0007669"/>
    <property type="project" value="UniProtKB-UniRule"/>
</dbReference>
<dbReference type="GO" id="GO:0044211">
    <property type="term" value="P:CTP salvage"/>
    <property type="evidence" value="ECO:0007669"/>
    <property type="project" value="UniProtKB-UniRule"/>
</dbReference>
<dbReference type="GO" id="GO:0044206">
    <property type="term" value="P:UMP salvage"/>
    <property type="evidence" value="ECO:0007669"/>
    <property type="project" value="UniProtKB-UniRule"/>
</dbReference>
<dbReference type="CDD" id="cd02023">
    <property type="entry name" value="UMPK"/>
    <property type="match status" value="1"/>
</dbReference>
<dbReference type="Gene3D" id="3.40.50.300">
    <property type="entry name" value="P-loop containing nucleotide triphosphate hydrolases"/>
    <property type="match status" value="1"/>
</dbReference>
<dbReference type="HAMAP" id="MF_00551">
    <property type="entry name" value="Uridine_kinase"/>
    <property type="match status" value="1"/>
</dbReference>
<dbReference type="InterPro" id="IPR027417">
    <property type="entry name" value="P-loop_NTPase"/>
</dbReference>
<dbReference type="InterPro" id="IPR006083">
    <property type="entry name" value="PRK/URK"/>
</dbReference>
<dbReference type="InterPro" id="IPR026008">
    <property type="entry name" value="Uridine_kinase"/>
</dbReference>
<dbReference type="InterPro" id="IPR000764">
    <property type="entry name" value="Uridine_kinase-like"/>
</dbReference>
<dbReference type="NCBIfam" id="NF004018">
    <property type="entry name" value="PRK05480.1"/>
    <property type="match status" value="1"/>
</dbReference>
<dbReference type="NCBIfam" id="TIGR00235">
    <property type="entry name" value="udk"/>
    <property type="match status" value="1"/>
</dbReference>
<dbReference type="PANTHER" id="PTHR10285">
    <property type="entry name" value="URIDINE KINASE"/>
    <property type="match status" value="1"/>
</dbReference>
<dbReference type="Pfam" id="PF00485">
    <property type="entry name" value="PRK"/>
    <property type="match status" value="1"/>
</dbReference>
<dbReference type="PRINTS" id="PR00988">
    <property type="entry name" value="URIDINKINASE"/>
</dbReference>
<dbReference type="SUPFAM" id="SSF52540">
    <property type="entry name" value="P-loop containing nucleoside triphosphate hydrolases"/>
    <property type="match status" value="1"/>
</dbReference>
<gene>
    <name evidence="1" type="primary">udk</name>
    <name type="ordered locus">TTHA0578</name>
</gene>